<feature type="chain" id="PRO_0000369638" description="UPF0738 protein BCAH187_A1357">
    <location>
        <begin position="1"/>
        <end position="123"/>
    </location>
</feature>
<evidence type="ECO:0000255" key="1">
    <source>
        <dbReference type="HAMAP-Rule" id="MF_01861"/>
    </source>
</evidence>
<protein>
    <recommendedName>
        <fullName evidence="1">UPF0738 protein BCAH187_A1357</fullName>
    </recommendedName>
</protein>
<comment type="similarity">
    <text evidence="1">Belongs to the UPF0738 family.</text>
</comment>
<organism>
    <name type="scientific">Bacillus cereus (strain AH187)</name>
    <dbReference type="NCBI Taxonomy" id="405534"/>
    <lineage>
        <taxon>Bacteria</taxon>
        <taxon>Bacillati</taxon>
        <taxon>Bacillota</taxon>
        <taxon>Bacilli</taxon>
        <taxon>Bacillales</taxon>
        <taxon>Bacillaceae</taxon>
        <taxon>Bacillus</taxon>
        <taxon>Bacillus cereus group</taxon>
    </lineage>
</organism>
<reference key="1">
    <citation type="submission" date="2008-10" db="EMBL/GenBank/DDBJ databases">
        <title>Genome sequence of Bacillus cereus AH187.</title>
        <authorList>
            <person name="Dodson R.J."/>
            <person name="Durkin A.S."/>
            <person name="Rosovitz M.J."/>
            <person name="Rasko D.A."/>
            <person name="Kolsto A.B."/>
            <person name="Okstad O.A."/>
            <person name="Ravel J."/>
            <person name="Sutton G."/>
        </authorList>
    </citation>
    <scope>NUCLEOTIDE SEQUENCE [LARGE SCALE GENOMIC DNA]</scope>
    <source>
        <strain>AH187</strain>
    </source>
</reference>
<dbReference type="EMBL" id="CP001177">
    <property type="protein sequence ID" value="ACJ82260.1"/>
    <property type="molecule type" value="Genomic_DNA"/>
</dbReference>
<dbReference type="KEGG" id="bcr:BCAH187_A1357"/>
<dbReference type="HOGENOM" id="CLU_142282_0_0_9"/>
<dbReference type="Proteomes" id="UP000002214">
    <property type="component" value="Chromosome"/>
</dbReference>
<dbReference type="HAMAP" id="MF_01861">
    <property type="entry name" value="UPF0738"/>
    <property type="match status" value="1"/>
</dbReference>
<dbReference type="InterPro" id="IPR020908">
    <property type="entry name" value="UPF0738"/>
</dbReference>
<dbReference type="Pfam" id="PF19785">
    <property type="entry name" value="UPF0738"/>
    <property type="match status" value="1"/>
</dbReference>
<proteinExistence type="inferred from homology"/>
<sequence length="123" mass="14203">MQNKIQVKSVEKRENALIFCAENSEIEVKELSARNHVLVDSDNLSFLYILENESSFIYVSIPHTCWEAMHEAMNNDVVMFVRVNDIEMELEGLKEEVEYLVENIEGNANYGEELVTAVEKVFL</sequence>
<gene>
    <name type="ordered locus">BCAH187_A1357</name>
</gene>
<name>Y1357_BACC7</name>
<accession>B7I0B1</accession>